<feature type="chain" id="PRO_0000171790" description="Putative membrane protein insertion efficiency factor">
    <location>
        <begin position="1"/>
        <end position="78"/>
    </location>
</feature>
<reference key="1">
    <citation type="journal article" date="2004" name="Nucleic Acids Res.">
        <title>The genome sequence of Bacillus cereus ATCC 10987 reveals metabolic adaptations and a large plasmid related to Bacillus anthracis pXO1.</title>
        <authorList>
            <person name="Rasko D.A."/>
            <person name="Ravel J."/>
            <person name="Oekstad O.A."/>
            <person name="Helgason E."/>
            <person name="Cer R.Z."/>
            <person name="Jiang L."/>
            <person name="Shores K.A."/>
            <person name="Fouts D.E."/>
            <person name="Tourasse N.J."/>
            <person name="Angiuoli S.V."/>
            <person name="Kolonay J.F."/>
            <person name="Nelson W.C."/>
            <person name="Kolstoe A.-B."/>
            <person name="Fraser C.M."/>
            <person name="Read T.D."/>
        </authorList>
    </citation>
    <scope>NUCLEOTIDE SEQUENCE [LARGE SCALE GENOMIC DNA]</scope>
    <source>
        <strain>ATCC 10987 / NRS 248</strain>
    </source>
</reference>
<dbReference type="EMBL" id="AE017194">
    <property type="protein sequence ID" value="AAS43848.1"/>
    <property type="molecule type" value="Genomic_DNA"/>
</dbReference>
<dbReference type="KEGG" id="bca:BCE_4947"/>
<dbReference type="HOGENOM" id="CLU_144811_6_0_9"/>
<dbReference type="Proteomes" id="UP000002527">
    <property type="component" value="Chromosome"/>
</dbReference>
<dbReference type="GO" id="GO:0005886">
    <property type="term" value="C:plasma membrane"/>
    <property type="evidence" value="ECO:0007669"/>
    <property type="project" value="UniProtKB-SubCell"/>
</dbReference>
<dbReference type="HAMAP" id="MF_00386">
    <property type="entry name" value="UPF0161_YidD"/>
    <property type="match status" value="1"/>
</dbReference>
<dbReference type="InterPro" id="IPR002696">
    <property type="entry name" value="Membr_insert_effic_factor_YidD"/>
</dbReference>
<dbReference type="NCBIfam" id="TIGR00278">
    <property type="entry name" value="membrane protein insertion efficiency factor YidD"/>
    <property type="match status" value="1"/>
</dbReference>
<dbReference type="PANTHER" id="PTHR33383">
    <property type="entry name" value="MEMBRANE PROTEIN INSERTION EFFICIENCY FACTOR-RELATED"/>
    <property type="match status" value="1"/>
</dbReference>
<dbReference type="PANTHER" id="PTHR33383:SF1">
    <property type="entry name" value="MEMBRANE PROTEIN INSERTION EFFICIENCY FACTOR-RELATED"/>
    <property type="match status" value="1"/>
</dbReference>
<dbReference type="Pfam" id="PF01809">
    <property type="entry name" value="YidD"/>
    <property type="match status" value="1"/>
</dbReference>
<dbReference type="SMART" id="SM01234">
    <property type="entry name" value="Haemolytic"/>
    <property type="match status" value="1"/>
</dbReference>
<organism>
    <name type="scientific">Bacillus cereus (strain ATCC 10987 / NRS 248)</name>
    <dbReference type="NCBI Taxonomy" id="222523"/>
    <lineage>
        <taxon>Bacteria</taxon>
        <taxon>Bacillati</taxon>
        <taxon>Bacillota</taxon>
        <taxon>Bacilli</taxon>
        <taxon>Bacillales</taxon>
        <taxon>Bacillaceae</taxon>
        <taxon>Bacillus</taxon>
        <taxon>Bacillus cereus group</taxon>
    </lineage>
</organism>
<name>YIDD_BACC1</name>
<accession>P61464</accession>
<sequence>MKQIFIGIIRFYQKFISPMTPPTCRFYPTCSHYGLEAFQKHGALKGFWLTCKRILKCHPFHPGGFDPVPDKKDDKVHS</sequence>
<evidence type="ECO:0000255" key="1">
    <source>
        <dbReference type="HAMAP-Rule" id="MF_00386"/>
    </source>
</evidence>
<protein>
    <recommendedName>
        <fullName evidence="1">Putative membrane protein insertion efficiency factor</fullName>
    </recommendedName>
</protein>
<gene>
    <name type="ordered locus">BCE_4947</name>
</gene>
<comment type="function">
    <text evidence="1">Could be involved in insertion of integral membrane proteins into the membrane.</text>
</comment>
<comment type="subcellular location">
    <subcellularLocation>
        <location evidence="1">Cell membrane</location>
        <topology evidence="1">Peripheral membrane protein</topology>
        <orientation evidence="1">Cytoplasmic side</orientation>
    </subcellularLocation>
</comment>
<comment type="similarity">
    <text evidence="1">Belongs to the UPF0161 family.</text>
</comment>
<proteinExistence type="inferred from homology"/>
<keyword id="KW-1003">Cell membrane</keyword>
<keyword id="KW-0472">Membrane</keyword>